<gene>
    <name evidence="2" type="primary">infB</name>
    <name type="ordered locus">GWCH70_1155</name>
</gene>
<protein>
    <recommendedName>
        <fullName evidence="2">Translation initiation factor IF-2</fullName>
    </recommendedName>
</protein>
<proteinExistence type="inferred from homology"/>
<reference key="1">
    <citation type="submission" date="2009-06" db="EMBL/GenBank/DDBJ databases">
        <title>Complete sequence of chromosome of Geopacillus sp. WCH70.</title>
        <authorList>
            <consortium name="US DOE Joint Genome Institute"/>
            <person name="Lucas S."/>
            <person name="Copeland A."/>
            <person name="Lapidus A."/>
            <person name="Glavina del Rio T."/>
            <person name="Dalin E."/>
            <person name="Tice H."/>
            <person name="Bruce D."/>
            <person name="Goodwin L."/>
            <person name="Pitluck S."/>
            <person name="Chertkov O."/>
            <person name="Brettin T."/>
            <person name="Detter J.C."/>
            <person name="Han C."/>
            <person name="Larimer F."/>
            <person name="Land M."/>
            <person name="Hauser L."/>
            <person name="Kyrpides N."/>
            <person name="Mikhailova N."/>
            <person name="Brumm P."/>
            <person name="Mead D.A."/>
            <person name="Richardson P."/>
        </authorList>
    </citation>
    <scope>NUCLEOTIDE SEQUENCE [LARGE SCALE GENOMIC DNA]</scope>
    <source>
        <strain>WCH70</strain>
    </source>
</reference>
<comment type="function">
    <text evidence="2">One of the essential components for the initiation of protein synthesis. Protects formylmethionyl-tRNA from spontaneous hydrolysis and promotes its binding to the 30S ribosomal subunits. Also involved in the hydrolysis of GTP during the formation of the 70S ribosomal complex.</text>
</comment>
<comment type="subcellular location">
    <subcellularLocation>
        <location evidence="2">Cytoplasm</location>
    </subcellularLocation>
</comment>
<comment type="similarity">
    <text evidence="2">Belongs to the TRAFAC class translation factor GTPase superfamily. Classic translation factor GTPase family. IF-2 subfamily.</text>
</comment>
<accession>C5D9C9</accession>
<organism>
    <name type="scientific">Geobacillus sp. (strain WCH70)</name>
    <dbReference type="NCBI Taxonomy" id="471223"/>
    <lineage>
        <taxon>Bacteria</taxon>
        <taxon>Bacillati</taxon>
        <taxon>Bacillota</taxon>
        <taxon>Bacilli</taxon>
        <taxon>Bacillales</taxon>
        <taxon>Anoxybacillaceae</taxon>
        <taxon>Geobacillus</taxon>
    </lineage>
</organism>
<keyword id="KW-0963">Cytoplasm</keyword>
<keyword id="KW-0342">GTP-binding</keyword>
<keyword id="KW-0396">Initiation factor</keyword>
<keyword id="KW-0547">Nucleotide-binding</keyword>
<keyword id="KW-0648">Protein biosynthesis</keyword>
<sequence length="732" mass="81945">MSKMRVYEYAKKNNVPSKDVIHKLKEMNIEVTNHMATLEPEVVEKLDHTYNKKNERPQASAPKEKQKAPVKPKNYVDDFDDEDEEVVKTKVPKKKSANKKKEGKKHDLQLQQQEKKIFHQQKKKIKGKAKAKEQQPVQQEQPMKKEKELPKKITFEGTLTVAELAKKLGREPSEIIKKLFMLGVMATINQELDKDAIELICSDYGVEVEEKVVIDETNFESIEIVDDPEDLVERPPVVTIMGHVDHGKTTLLDSIRHSKVTEQEAGGITQHIGAYQVTVNDKKITFLDTPGHEAFTTMRARGAQVTDIVVLVVAADDGVMPQTVEAINHAKAANVPIIVAINKMDKPDANPDRVMQELMEYNLIPEEWGGDTIFCKLSAKTGEGIDNLLEMILLVSEMEELKANPNRRATGTVIEAKLDKGRGPVATLLVQAGTLHVGDPIVVGCTYGRVRAMVNDTGRRVKEAGPSTPVEITGLHEVPQAGDRFMVFEDEKKARQIGEARAQKQLMEQRNMKARVSLDDLFEQIKQGEMKELNIIVKADVQGSVEALVAALQKIEVEGVRVKIIHAAVGAITESDILLATTSNAIVIGFNVRPDANAKRVAESEKVDIRLHRIIYKVIEEIEAAMKGMLDPEYEEKVIGQAEVRQTFKVSKVGTIAGCYVTDGKITRDSKVRLIRQGIVVYEGEIDSLKRFKDDVKEVMQGYECGLTIKNFNDIKEGDVIEAYIMQEVERK</sequence>
<dbReference type="EMBL" id="CP001638">
    <property type="protein sequence ID" value="ACS24015.1"/>
    <property type="molecule type" value="Genomic_DNA"/>
</dbReference>
<dbReference type="SMR" id="C5D9C9"/>
<dbReference type="STRING" id="471223.GWCH70_1155"/>
<dbReference type="KEGG" id="gwc:GWCH70_1155"/>
<dbReference type="eggNOG" id="COG0532">
    <property type="taxonomic scope" value="Bacteria"/>
</dbReference>
<dbReference type="HOGENOM" id="CLU_006301_5_1_9"/>
<dbReference type="OrthoDB" id="9811804at2"/>
<dbReference type="GO" id="GO:0005829">
    <property type="term" value="C:cytosol"/>
    <property type="evidence" value="ECO:0007669"/>
    <property type="project" value="TreeGrafter"/>
</dbReference>
<dbReference type="GO" id="GO:0005525">
    <property type="term" value="F:GTP binding"/>
    <property type="evidence" value="ECO:0007669"/>
    <property type="project" value="UniProtKB-KW"/>
</dbReference>
<dbReference type="GO" id="GO:0003924">
    <property type="term" value="F:GTPase activity"/>
    <property type="evidence" value="ECO:0007669"/>
    <property type="project" value="UniProtKB-UniRule"/>
</dbReference>
<dbReference type="GO" id="GO:0003743">
    <property type="term" value="F:translation initiation factor activity"/>
    <property type="evidence" value="ECO:0007669"/>
    <property type="project" value="UniProtKB-UniRule"/>
</dbReference>
<dbReference type="CDD" id="cd01887">
    <property type="entry name" value="IF2_eIF5B"/>
    <property type="match status" value="1"/>
</dbReference>
<dbReference type="CDD" id="cd03702">
    <property type="entry name" value="IF2_mtIF2_II"/>
    <property type="match status" value="1"/>
</dbReference>
<dbReference type="CDD" id="cd03692">
    <property type="entry name" value="mtIF2_IVc"/>
    <property type="match status" value="1"/>
</dbReference>
<dbReference type="FunFam" id="2.40.30.10:FF:000007">
    <property type="entry name" value="Translation initiation factor IF-2"/>
    <property type="match status" value="1"/>
</dbReference>
<dbReference type="FunFam" id="2.40.30.10:FF:000008">
    <property type="entry name" value="Translation initiation factor IF-2"/>
    <property type="match status" value="1"/>
</dbReference>
<dbReference type="FunFam" id="3.40.50.10050:FF:000001">
    <property type="entry name" value="Translation initiation factor IF-2"/>
    <property type="match status" value="1"/>
</dbReference>
<dbReference type="FunFam" id="3.40.50.300:FF:000019">
    <property type="entry name" value="Translation initiation factor IF-2"/>
    <property type="match status" value="1"/>
</dbReference>
<dbReference type="Gene3D" id="1.10.10.2480">
    <property type="match status" value="1"/>
</dbReference>
<dbReference type="Gene3D" id="3.40.50.300">
    <property type="entry name" value="P-loop containing nucleotide triphosphate hydrolases"/>
    <property type="match status" value="1"/>
</dbReference>
<dbReference type="Gene3D" id="2.40.30.10">
    <property type="entry name" value="Translation factors"/>
    <property type="match status" value="2"/>
</dbReference>
<dbReference type="Gene3D" id="3.40.50.10050">
    <property type="entry name" value="Translation initiation factor IF- 2, domain 3"/>
    <property type="match status" value="1"/>
</dbReference>
<dbReference type="HAMAP" id="MF_00100_B">
    <property type="entry name" value="IF_2_B"/>
    <property type="match status" value="1"/>
</dbReference>
<dbReference type="InterPro" id="IPR053905">
    <property type="entry name" value="EF-G-like_DII"/>
</dbReference>
<dbReference type="InterPro" id="IPR004161">
    <property type="entry name" value="EFTu-like_2"/>
</dbReference>
<dbReference type="InterPro" id="IPR044145">
    <property type="entry name" value="IF2_II"/>
</dbReference>
<dbReference type="InterPro" id="IPR006847">
    <property type="entry name" value="IF2_N"/>
</dbReference>
<dbReference type="InterPro" id="IPR027417">
    <property type="entry name" value="P-loop_NTPase"/>
</dbReference>
<dbReference type="InterPro" id="IPR005225">
    <property type="entry name" value="Small_GTP-bd"/>
</dbReference>
<dbReference type="InterPro" id="IPR000795">
    <property type="entry name" value="T_Tr_GTP-bd_dom"/>
</dbReference>
<dbReference type="InterPro" id="IPR000178">
    <property type="entry name" value="TF_IF2_bacterial-like"/>
</dbReference>
<dbReference type="InterPro" id="IPR015760">
    <property type="entry name" value="TIF_IF2"/>
</dbReference>
<dbReference type="InterPro" id="IPR023115">
    <property type="entry name" value="TIF_IF2_dom3"/>
</dbReference>
<dbReference type="InterPro" id="IPR036925">
    <property type="entry name" value="TIF_IF2_dom3_sf"/>
</dbReference>
<dbReference type="InterPro" id="IPR009000">
    <property type="entry name" value="Transl_B-barrel_sf"/>
</dbReference>
<dbReference type="NCBIfam" id="TIGR00487">
    <property type="entry name" value="IF-2"/>
    <property type="match status" value="1"/>
</dbReference>
<dbReference type="NCBIfam" id="TIGR00231">
    <property type="entry name" value="small_GTP"/>
    <property type="match status" value="1"/>
</dbReference>
<dbReference type="PANTHER" id="PTHR43381:SF5">
    <property type="entry name" value="TR-TYPE G DOMAIN-CONTAINING PROTEIN"/>
    <property type="match status" value="1"/>
</dbReference>
<dbReference type="PANTHER" id="PTHR43381">
    <property type="entry name" value="TRANSLATION INITIATION FACTOR IF-2-RELATED"/>
    <property type="match status" value="1"/>
</dbReference>
<dbReference type="Pfam" id="PF22042">
    <property type="entry name" value="EF-G_D2"/>
    <property type="match status" value="1"/>
</dbReference>
<dbReference type="Pfam" id="PF00009">
    <property type="entry name" value="GTP_EFTU"/>
    <property type="match status" value="1"/>
</dbReference>
<dbReference type="Pfam" id="PF03144">
    <property type="entry name" value="GTP_EFTU_D2"/>
    <property type="match status" value="1"/>
</dbReference>
<dbReference type="Pfam" id="PF11987">
    <property type="entry name" value="IF-2"/>
    <property type="match status" value="1"/>
</dbReference>
<dbReference type="Pfam" id="PF04760">
    <property type="entry name" value="IF2_N"/>
    <property type="match status" value="2"/>
</dbReference>
<dbReference type="SUPFAM" id="SSF52156">
    <property type="entry name" value="Initiation factor IF2/eIF5b, domain 3"/>
    <property type="match status" value="1"/>
</dbReference>
<dbReference type="SUPFAM" id="SSF52540">
    <property type="entry name" value="P-loop containing nucleoside triphosphate hydrolases"/>
    <property type="match status" value="1"/>
</dbReference>
<dbReference type="SUPFAM" id="SSF50447">
    <property type="entry name" value="Translation proteins"/>
    <property type="match status" value="2"/>
</dbReference>
<dbReference type="PROSITE" id="PS51722">
    <property type="entry name" value="G_TR_2"/>
    <property type="match status" value="1"/>
</dbReference>
<dbReference type="PROSITE" id="PS01176">
    <property type="entry name" value="IF2"/>
    <property type="match status" value="1"/>
</dbReference>
<name>IF2_GEOSW</name>
<feature type="chain" id="PRO_1000202774" description="Translation initiation factor IF-2">
    <location>
        <begin position="1"/>
        <end position="732"/>
    </location>
</feature>
<feature type="domain" description="tr-type G">
    <location>
        <begin position="233"/>
        <end position="402"/>
    </location>
</feature>
<feature type="region of interest" description="Disordered" evidence="3">
    <location>
        <begin position="40"/>
        <end position="147"/>
    </location>
</feature>
<feature type="region of interest" description="G1" evidence="1">
    <location>
        <begin position="242"/>
        <end position="249"/>
    </location>
</feature>
<feature type="region of interest" description="G2" evidence="1">
    <location>
        <begin position="267"/>
        <end position="271"/>
    </location>
</feature>
<feature type="region of interest" description="G3" evidence="1">
    <location>
        <begin position="288"/>
        <end position="291"/>
    </location>
</feature>
<feature type="region of interest" description="G4" evidence="1">
    <location>
        <begin position="342"/>
        <end position="345"/>
    </location>
</feature>
<feature type="region of interest" description="G5" evidence="1">
    <location>
        <begin position="378"/>
        <end position="380"/>
    </location>
</feature>
<feature type="compositionally biased region" description="Basic and acidic residues" evidence="3">
    <location>
        <begin position="42"/>
        <end position="67"/>
    </location>
</feature>
<feature type="compositionally biased region" description="Basic residues" evidence="3">
    <location>
        <begin position="90"/>
        <end position="103"/>
    </location>
</feature>
<feature type="compositionally biased region" description="Basic and acidic residues" evidence="3">
    <location>
        <begin position="104"/>
        <end position="117"/>
    </location>
</feature>
<feature type="compositionally biased region" description="Basic residues" evidence="3">
    <location>
        <begin position="118"/>
        <end position="129"/>
    </location>
</feature>
<feature type="binding site" evidence="2">
    <location>
        <begin position="242"/>
        <end position="249"/>
    </location>
    <ligand>
        <name>GTP</name>
        <dbReference type="ChEBI" id="CHEBI:37565"/>
    </ligand>
</feature>
<feature type="binding site" evidence="2">
    <location>
        <begin position="288"/>
        <end position="292"/>
    </location>
    <ligand>
        <name>GTP</name>
        <dbReference type="ChEBI" id="CHEBI:37565"/>
    </ligand>
</feature>
<feature type="binding site" evidence="2">
    <location>
        <begin position="342"/>
        <end position="345"/>
    </location>
    <ligand>
        <name>GTP</name>
        <dbReference type="ChEBI" id="CHEBI:37565"/>
    </ligand>
</feature>
<evidence type="ECO:0000250" key="1"/>
<evidence type="ECO:0000255" key="2">
    <source>
        <dbReference type="HAMAP-Rule" id="MF_00100"/>
    </source>
</evidence>
<evidence type="ECO:0000256" key="3">
    <source>
        <dbReference type="SAM" id="MobiDB-lite"/>
    </source>
</evidence>